<reference key="1">
    <citation type="journal article" date="2009" name="PLoS ONE">
        <title>Genome degradation in Brucella ovis corresponds with narrowing of its host range and tissue tropism.</title>
        <authorList>
            <person name="Tsolis R.M."/>
            <person name="Seshadri R."/>
            <person name="Santos R.L."/>
            <person name="Sangari F.J."/>
            <person name="Lobo J.M."/>
            <person name="de Jong M.F."/>
            <person name="Ren Q."/>
            <person name="Myers G."/>
            <person name="Brinkac L.M."/>
            <person name="Nelson W.C."/>
            <person name="Deboy R.T."/>
            <person name="Angiuoli S."/>
            <person name="Khouri H."/>
            <person name="Dimitrov G."/>
            <person name="Robinson J.R."/>
            <person name="Mulligan S."/>
            <person name="Walker R.L."/>
            <person name="Elzer P.E."/>
            <person name="Hassan K.A."/>
            <person name="Paulsen I.T."/>
        </authorList>
    </citation>
    <scope>NUCLEOTIDE SEQUENCE [LARGE SCALE GENOMIC DNA]</scope>
    <source>
        <strain>ATCC 25840 / 63/290 / NCTC 10512</strain>
    </source>
</reference>
<organism>
    <name type="scientific">Brucella ovis (strain ATCC 25840 / 63/290 / NCTC 10512)</name>
    <dbReference type="NCBI Taxonomy" id="444178"/>
    <lineage>
        <taxon>Bacteria</taxon>
        <taxon>Pseudomonadati</taxon>
        <taxon>Pseudomonadota</taxon>
        <taxon>Alphaproteobacteria</taxon>
        <taxon>Hyphomicrobiales</taxon>
        <taxon>Brucellaceae</taxon>
        <taxon>Brucella/Ochrobactrum group</taxon>
        <taxon>Brucella</taxon>
    </lineage>
</organism>
<feature type="chain" id="PRO_1000086094" description="Small ribosomal subunit protein uS3">
    <location>
        <begin position="1"/>
        <end position="236"/>
    </location>
</feature>
<feature type="domain" description="KH type-2" evidence="1">
    <location>
        <begin position="39"/>
        <end position="107"/>
    </location>
</feature>
<feature type="region of interest" description="Disordered" evidence="2">
    <location>
        <begin position="214"/>
        <end position="236"/>
    </location>
</feature>
<name>RS3_BRUO2</name>
<evidence type="ECO:0000255" key="1">
    <source>
        <dbReference type="HAMAP-Rule" id="MF_01309"/>
    </source>
</evidence>
<evidence type="ECO:0000256" key="2">
    <source>
        <dbReference type="SAM" id="MobiDB-lite"/>
    </source>
</evidence>
<evidence type="ECO:0000305" key="3"/>
<sequence length="236" mass="26604">MGQKINPIGLRLGINRTWDSRWYANTGEYGKLLHEDVKIREFLTEELKQAAISKIVIERPHKKCRVTIHSARPGIIIGKKGADIEKLRKKLSEMTNADTSLNIVEVRKPEVDATLIAQSIAQQLERRVAFRRAMKRAVQSAMRLGAEGIRINCSGRLGGAEIARMEWYREGRVPLHTLRADIDYGTAEAKTAYGICGVKVWVFKGEILEHDPMASERRAVEGDNQGSSSNRRRENA</sequence>
<comment type="function">
    <text evidence="1">Binds the lower part of the 30S subunit head. Binds mRNA in the 70S ribosome, positioning it for translation.</text>
</comment>
<comment type="subunit">
    <text evidence="1">Part of the 30S ribosomal subunit. Forms a tight complex with proteins S10 and S14.</text>
</comment>
<comment type="similarity">
    <text evidence="1">Belongs to the universal ribosomal protein uS3 family.</text>
</comment>
<keyword id="KW-0687">Ribonucleoprotein</keyword>
<keyword id="KW-0689">Ribosomal protein</keyword>
<keyword id="KW-0694">RNA-binding</keyword>
<keyword id="KW-0699">rRNA-binding</keyword>
<accession>A5VR00</accession>
<gene>
    <name evidence="1" type="primary">rpsC</name>
    <name type="ordered locus">BOV_1190</name>
</gene>
<proteinExistence type="inferred from homology"/>
<protein>
    <recommendedName>
        <fullName evidence="1">Small ribosomal subunit protein uS3</fullName>
    </recommendedName>
    <alternativeName>
        <fullName evidence="3">30S ribosomal protein S3</fullName>
    </alternativeName>
</protein>
<dbReference type="EMBL" id="CP000708">
    <property type="protein sequence ID" value="ABQ60980.1"/>
    <property type="molecule type" value="Genomic_DNA"/>
</dbReference>
<dbReference type="RefSeq" id="WP_002964356.1">
    <property type="nucleotide sequence ID" value="NC_009505.1"/>
</dbReference>
<dbReference type="SMR" id="A5VR00"/>
<dbReference type="GeneID" id="97533530"/>
<dbReference type="KEGG" id="bov:BOV_1190"/>
<dbReference type="HOGENOM" id="CLU_058591_0_2_5"/>
<dbReference type="PhylomeDB" id="A5VR00"/>
<dbReference type="Proteomes" id="UP000006383">
    <property type="component" value="Chromosome I"/>
</dbReference>
<dbReference type="GO" id="GO:0022627">
    <property type="term" value="C:cytosolic small ribosomal subunit"/>
    <property type="evidence" value="ECO:0007669"/>
    <property type="project" value="TreeGrafter"/>
</dbReference>
<dbReference type="GO" id="GO:0003729">
    <property type="term" value="F:mRNA binding"/>
    <property type="evidence" value="ECO:0007669"/>
    <property type="project" value="UniProtKB-UniRule"/>
</dbReference>
<dbReference type="GO" id="GO:0019843">
    <property type="term" value="F:rRNA binding"/>
    <property type="evidence" value="ECO:0007669"/>
    <property type="project" value="UniProtKB-UniRule"/>
</dbReference>
<dbReference type="GO" id="GO:0003735">
    <property type="term" value="F:structural constituent of ribosome"/>
    <property type="evidence" value="ECO:0007669"/>
    <property type="project" value="InterPro"/>
</dbReference>
<dbReference type="GO" id="GO:0006412">
    <property type="term" value="P:translation"/>
    <property type="evidence" value="ECO:0007669"/>
    <property type="project" value="UniProtKB-UniRule"/>
</dbReference>
<dbReference type="CDD" id="cd02412">
    <property type="entry name" value="KH-II_30S_S3"/>
    <property type="match status" value="1"/>
</dbReference>
<dbReference type="FunFam" id="3.30.1140.32:FF:000009">
    <property type="entry name" value="30S ribosomal protein S3"/>
    <property type="match status" value="1"/>
</dbReference>
<dbReference type="FunFam" id="3.30.300.20:FF:000001">
    <property type="entry name" value="30S ribosomal protein S3"/>
    <property type="match status" value="1"/>
</dbReference>
<dbReference type="Gene3D" id="3.30.300.20">
    <property type="match status" value="1"/>
</dbReference>
<dbReference type="Gene3D" id="3.30.1140.32">
    <property type="entry name" value="Ribosomal protein S3, C-terminal domain"/>
    <property type="match status" value="1"/>
</dbReference>
<dbReference type="HAMAP" id="MF_01309_B">
    <property type="entry name" value="Ribosomal_uS3_B"/>
    <property type="match status" value="1"/>
</dbReference>
<dbReference type="InterPro" id="IPR004087">
    <property type="entry name" value="KH_dom"/>
</dbReference>
<dbReference type="InterPro" id="IPR015946">
    <property type="entry name" value="KH_dom-like_a/b"/>
</dbReference>
<dbReference type="InterPro" id="IPR004044">
    <property type="entry name" value="KH_dom_type_2"/>
</dbReference>
<dbReference type="InterPro" id="IPR009019">
    <property type="entry name" value="KH_sf_prok-type"/>
</dbReference>
<dbReference type="InterPro" id="IPR036419">
    <property type="entry name" value="Ribosomal_S3_C_sf"/>
</dbReference>
<dbReference type="InterPro" id="IPR005704">
    <property type="entry name" value="Ribosomal_uS3_bac-typ"/>
</dbReference>
<dbReference type="InterPro" id="IPR001351">
    <property type="entry name" value="Ribosomal_uS3_C"/>
</dbReference>
<dbReference type="InterPro" id="IPR018280">
    <property type="entry name" value="Ribosomal_uS3_CS"/>
</dbReference>
<dbReference type="NCBIfam" id="TIGR01009">
    <property type="entry name" value="rpsC_bact"/>
    <property type="match status" value="1"/>
</dbReference>
<dbReference type="PANTHER" id="PTHR11760">
    <property type="entry name" value="30S/40S RIBOSOMAL PROTEIN S3"/>
    <property type="match status" value="1"/>
</dbReference>
<dbReference type="PANTHER" id="PTHR11760:SF19">
    <property type="entry name" value="SMALL RIBOSOMAL SUBUNIT PROTEIN US3C"/>
    <property type="match status" value="1"/>
</dbReference>
<dbReference type="Pfam" id="PF07650">
    <property type="entry name" value="KH_2"/>
    <property type="match status" value="1"/>
</dbReference>
<dbReference type="Pfam" id="PF00189">
    <property type="entry name" value="Ribosomal_S3_C"/>
    <property type="match status" value="1"/>
</dbReference>
<dbReference type="SMART" id="SM00322">
    <property type="entry name" value="KH"/>
    <property type="match status" value="1"/>
</dbReference>
<dbReference type="SUPFAM" id="SSF54814">
    <property type="entry name" value="Prokaryotic type KH domain (KH-domain type II)"/>
    <property type="match status" value="1"/>
</dbReference>
<dbReference type="SUPFAM" id="SSF54821">
    <property type="entry name" value="Ribosomal protein S3 C-terminal domain"/>
    <property type="match status" value="1"/>
</dbReference>
<dbReference type="PROSITE" id="PS50823">
    <property type="entry name" value="KH_TYPE_2"/>
    <property type="match status" value="1"/>
</dbReference>
<dbReference type="PROSITE" id="PS00548">
    <property type="entry name" value="RIBOSOMAL_S3"/>
    <property type="match status" value="1"/>
</dbReference>